<protein>
    <recommendedName>
        <fullName>Uncharacterized protein jhp_0985</fullName>
    </recommendedName>
</protein>
<gene>
    <name type="ordered locus">jhp_0985</name>
</gene>
<feature type="chain" id="PRO_0000157375" description="Uncharacterized protein jhp_0985">
    <location>
        <begin position="1"/>
        <end position="616"/>
    </location>
</feature>
<proteinExistence type="inferred from homology"/>
<name>Y396_HELPJ</name>
<accession>Q9ZKF3</accession>
<comment type="similarity">
    <text evidence="1">Belongs to the UbiD family.</text>
</comment>
<evidence type="ECO:0000305" key="1"/>
<reference key="1">
    <citation type="journal article" date="1999" name="Nature">
        <title>Genomic sequence comparison of two unrelated isolates of the human gastric pathogen Helicobacter pylori.</title>
        <authorList>
            <person name="Alm R.A."/>
            <person name="Ling L.-S.L."/>
            <person name="Moir D.T."/>
            <person name="King B.L."/>
            <person name="Brown E.D."/>
            <person name="Doig P.C."/>
            <person name="Smith D.R."/>
            <person name="Noonan B."/>
            <person name="Guild B.C."/>
            <person name="deJonge B.L."/>
            <person name="Carmel G."/>
            <person name="Tummino P.J."/>
            <person name="Caruso A."/>
            <person name="Uria-Nickelsen M."/>
            <person name="Mills D.M."/>
            <person name="Ives C."/>
            <person name="Gibson R."/>
            <person name="Merberg D."/>
            <person name="Mills S.D."/>
            <person name="Jiang Q."/>
            <person name="Taylor D.E."/>
            <person name="Vovis G.F."/>
            <person name="Trust T.J."/>
        </authorList>
    </citation>
    <scope>NUCLEOTIDE SEQUENCE [LARGE SCALE GENOMIC DNA]</scope>
    <source>
        <strain>J99 / ATCC 700824</strain>
    </source>
</reference>
<organism>
    <name type="scientific">Helicobacter pylori (strain J99 / ATCC 700824)</name>
    <name type="common">Campylobacter pylori J99</name>
    <dbReference type="NCBI Taxonomy" id="85963"/>
    <lineage>
        <taxon>Bacteria</taxon>
        <taxon>Pseudomonadati</taxon>
        <taxon>Campylobacterota</taxon>
        <taxon>Epsilonproteobacteria</taxon>
        <taxon>Campylobacterales</taxon>
        <taxon>Helicobacteraceae</taxon>
        <taxon>Helicobacter</taxon>
    </lineage>
</organism>
<dbReference type="EMBL" id="AE001439">
    <property type="protein sequence ID" value="AAD06568.1"/>
    <property type="molecule type" value="Genomic_DNA"/>
</dbReference>
<dbReference type="PIR" id="D71864">
    <property type="entry name" value="D71864"/>
</dbReference>
<dbReference type="RefSeq" id="WP_001204352.1">
    <property type="nucleotide sequence ID" value="NC_000921.1"/>
</dbReference>
<dbReference type="SMR" id="Q9ZKF3"/>
<dbReference type="KEGG" id="hpj:jhp_0985"/>
<dbReference type="PATRIC" id="fig|85963.30.peg.1606"/>
<dbReference type="eggNOG" id="COG0043">
    <property type="taxonomic scope" value="Bacteria"/>
</dbReference>
<dbReference type="Proteomes" id="UP000000804">
    <property type="component" value="Chromosome"/>
</dbReference>
<dbReference type="GO" id="GO:0005829">
    <property type="term" value="C:cytosol"/>
    <property type="evidence" value="ECO:0007669"/>
    <property type="project" value="TreeGrafter"/>
</dbReference>
<dbReference type="GO" id="GO:0008694">
    <property type="term" value="F:3-octaprenyl-4-hydroxybenzoate carboxy-lyase activity"/>
    <property type="evidence" value="ECO:0007669"/>
    <property type="project" value="TreeGrafter"/>
</dbReference>
<dbReference type="GO" id="GO:0006744">
    <property type="term" value="P:ubiquinone biosynthetic process"/>
    <property type="evidence" value="ECO:0007669"/>
    <property type="project" value="TreeGrafter"/>
</dbReference>
<dbReference type="Gene3D" id="3.40.1670.10">
    <property type="entry name" value="UbiD C-terminal domain-like"/>
    <property type="match status" value="1"/>
</dbReference>
<dbReference type="InterPro" id="IPR022390">
    <property type="entry name" value="HBDC"/>
</dbReference>
<dbReference type="InterPro" id="IPR002830">
    <property type="entry name" value="UbiD"/>
</dbReference>
<dbReference type="InterPro" id="IPR049381">
    <property type="entry name" value="UbiD-like_C"/>
</dbReference>
<dbReference type="InterPro" id="IPR049383">
    <property type="entry name" value="UbiD-like_N"/>
</dbReference>
<dbReference type="InterPro" id="IPR048304">
    <property type="entry name" value="UbiD_Rift_dom"/>
</dbReference>
<dbReference type="NCBIfam" id="TIGR03701">
    <property type="entry name" value="mena_SCO4490"/>
    <property type="match status" value="1"/>
</dbReference>
<dbReference type="NCBIfam" id="TIGR00148">
    <property type="entry name" value="UbiD family decarboxylase"/>
    <property type="match status" value="1"/>
</dbReference>
<dbReference type="PANTHER" id="PTHR30108">
    <property type="entry name" value="3-OCTAPRENYL-4-HYDROXYBENZOATE CARBOXY-LYASE-RELATED"/>
    <property type="match status" value="1"/>
</dbReference>
<dbReference type="PANTHER" id="PTHR30108:SF17">
    <property type="entry name" value="FERULIC ACID DECARBOXYLASE 1"/>
    <property type="match status" value="1"/>
</dbReference>
<dbReference type="Pfam" id="PF01977">
    <property type="entry name" value="UbiD"/>
    <property type="match status" value="1"/>
</dbReference>
<dbReference type="Pfam" id="PF20696">
    <property type="entry name" value="UbiD_C"/>
    <property type="match status" value="2"/>
</dbReference>
<dbReference type="Pfam" id="PF20695">
    <property type="entry name" value="UbiD_N"/>
    <property type="match status" value="1"/>
</dbReference>
<dbReference type="SUPFAM" id="SSF50475">
    <property type="entry name" value="FMN-binding split barrel"/>
    <property type="match status" value="1"/>
</dbReference>
<dbReference type="SUPFAM" id="SSF143968">
    <property type="entry name" value="UbiD C-terminal domain-like"/>
    <property type="match status" value="2"/>
</dbReference>
<sequence length="616" mass="70989">MRDFLKLLKKHDELKIIDTPLEVDLEIAHLAYIEAKKPNGGKALLFTQPIRKEHNQIKTFGMPVLMNAFGSFKRLDLLLKTPIEDLQQRMQAFLHFDAPKNFTESLKILKDLWDLRHVFPKKTARPKDLITKQDKEVNLWDLPVLKTWEKDGGAFITMGQVYTQSLDHKKKNLGMYRLQVYDKNHLGLHWQIHKDSQLFFHEYAKAKVKMPISIAIGGDLLYTWCATAPLPYGIYELMLYGFIREKKARVMPCLSNPLSVPSDCDIVIEGFVDCEKLELEGPFGDHTGYYTPIEPYPVLEVKTISYKKDSIYLATVVGKPPLEDKYMGYLTERLFLPLLQTHAPNLIDYYMPENGVFHNLILAKIHTRYNAHAKQVMHAFWGVGQMSFVKHAIFVNEDAPNLRDTNAIIEYILENFSKENALISQGVCDALDHASPEYAMGGKLGIDATSKSNTPYPTLLNDNALLALLQDKMQNIVLLKQYYPHTRNPICVISVEKKDKSVIELAKNLLGFEEHLRIVIFVEHASNDLNNPYMLLWRIVNNIDAKRDILTSKHCFFIDATNKGVMDKHFREWPTETNCSMEVIENLKKKGLLKDFETLNQKFHLTHSFSTHKEDL</sequence>